<proteinExistence type="evidence at protein level"/>
<dbReference type="EMBL" id="AY422991">
    <property type="protein sequence ID" value="AAR00321.1"/>
    <property type="molecule type" value="mRNA"/>
</dbReference>
<dbReference type="RefSeq" id="NP_001002961.1">
    <property type="nucleotide sequence ID" value="NM_001002961.1"/>
</dbReference>
<dbReference type="RefSeq" id="XP_038297645.1">
    <property type="nucleotide sequence ID" value="XM_038441717.1"/>
</dbReference>
<dbReference type="SMR" id="Q6TEQ7"/>
<dbReference type="BioGRID" id="139366">
    <property type="interactions" value="1"/>
</dbReference>
<dbReference type="DIP" id="DIP-44616N"/>
<dbReference type="FunCoup" id="Q6TEQ7">
    <property type="interactions" value="148"/>
</dbReference>
<dbReference type="IntAct" id="Q6TEQ7">
    <property type="interactions" value="2"/>
</dbReference>
<dbReference type="MINT" id="Q6TEQ7"/>
<dbReference type="STRING" id="9615.ENSCAFP00000049994"/>
<dbReference type="iPTMnet" id="Q6TEQ7"/>
<dbReference type="PaxDb" id="9612-ENSCAFP00000024537"/>
<dbReference type="Ensembl" id="ENSCAFT00030017582.1">
    <property type="protein sequence ID" value="ENSCAFP00030015356.1"/>
    <property type="gene ID" value="ENSCAFG00030009412.1"/>
</dbReference>
<dbReference type="GeneID" id="403435"/>
<dbReference type="KEGG" id="cfa:403435"/>
<dbReference type="CTD" id="302"/>
<dbReference type="eggNOG" id="KOG0819">
    <property type="taxonomic scope" value="Eukaryota"/>
</dbReference>
<dbReference type="HOGENOM" id="CLU_025300_0_0_1"/>
<dbReference type="InParanoid" id="Q6TEQ7"/>
<dbReference type="OMA" id="DLMRIRT"/>
<dbReference type="OrthoDB" id="37886at2759"/>
<dbReference type="TreeFam" id="TF105452"/>
<dbReference type="Reactome" id="R-CFA-6798695">
    <property type="pathway name" value="Neutrophil degranulation"/>
</dbReference>
<dbReference type="Reactome" id="R-CFA-75205">
    <property type="pathway name" value="Dissolution of Fibrin Clot"/>
</dbReference>
<dbReference type="Reactome" id="R-CFA-9860927">
    <property type="pathway name" value="Turbulent (oscillatory, disturbed) flow shear stress activates signaling by PIEZO1 and integrins in endothelial cells"/>
</dbReference>
<dbReference type="Proteomes" id="UP000002254">
    <property type="component" value="Unplaced"/>
</dbReference>
<dbReference type="Proteomes" id="UP000694429">
    <property type="component" value="Chromosome 30"/>
</dbReference>
<dbReference type="Proteomes" id="UP000694542">
    <property type="component" value="Unplaced"/>
</dbReference>
<dbReference type="Proteomes" id="UP000805418">
    <property type="component" value="Unplaced"/>
</dbReference>
<dbReference type="GO" id="GO:0005604">
    <property type="term" value="C:basement membrane"/>
    <property type="evidence" value="ECO:0007669"/>
    <property type="project" value="UniProtKB-SubCell"/>
</dbReference>
<dbReference type="GO" id="GO:0005737">
    <property type="term" value="C:cytoplasm"/>
    <property type="evidence" value="ECO:0000318"/>
    <property type="project" value="GO_Central"/>
</dbReference>
<dbReference type="GO" id="GO:0005768">
    <property type="term" value="C:endosome"/>
    <property type="evidence" value="ECO:0000250"/>
    <property type="project" value="UniProtKB"/>
</dbReference>
<dbReference type="GO" id="GO:0070382">
    <property type="term" value="C:exocytic vesicle"/>
    <property type="evidence" value="ECO:0000314"/>
    <property type="project" value="CAFA"/>
</dbReference>
<dbReference type="GO" id="GO:0005576">
    <property type="term" value="C:extracellular region"/>
    <property type="evidence" value="ECO:0007669"/>
    <property type="project" value="UniProtKB-KW"/>
</dbReference>
<dbReference type="GO" id="GO:0005634">
    <property type="term" value="C:nucleus"/>
    <property type="evidence" value="ECO:0000318"/>
    <property type="project" value="GO_Central"/>
</dbReference>
<dbReference type="GO" id="GO:0005886">
    <property type="term" value="C:plasma membrane"/>
    <property type="evidence" value="ECO:0000318"/>
    <property type="project" value="GO_Central"/>
</dbReference>
<dbReference type="GO" id="GO:0012506">
    <property type="term" value="C:vesicle membrane"/>
    <property type="evidence" value="ECO:0000318"/>
    <property type="project" value="GO_Central"/>
</dbReference>
<dbReference type="GO" id="GO:0005509">
    <property type="term" value="F:calcium ion binding"/>
    <property type="evidence" value="ECO:0007669"/>
    <property type="project" value="InterPro"/>
</dbReference>
<dbReference type="GO" id="GO:0005544">
    <property type="term" value="F:calcium-dependent phospholipid binding"/>
    <property type="evidence" value="ECO:0000318"/>
    <property type="project" value="GO_Central"/>
</dbReference>
<dbReference type="GO" id="GO:0008092">
    <property type="term" value="F:cytoskeletal protein binding"/>
    <property type="evidence" value="ECO:0007669"/>
    <property type="project" value="InterPro"/>
</dbReference>
<dbReference type="GO" id="GO:0001786">
    <property type="term" value="F:phosphatidylserine binding"/>
    <property type="evidence" value="ECO:0000318"/>
    <property type="project" value="GO_Central"/>
</dbReference>
<dbReference type="GO" id="GO:0004859">
    <property type="term" value="F:phospholipase inhibitor activity"/>
    <property type="evidence" value="ECO:0007669"/>
    <property type="project" value="InterPro"/>
</dbReference>
<dbReference type="GO" id="GO:1905602">
    <property type="term" value="P:positive regulation of receptor-mediated endocytosis involved in cholesterol transport"/>
    <property type="evidence" value="ECO:0000318"/>
    <property type="project" value="GO_Central"/>
</dbReference>
<dbReference type="FunFam" id="1.10.220.10:FF:000001">
    <property type="entry name" value="Annexin"/>
    <property type="match status" value="1"/>
</dbReference>
<dbReference type="FunFam" id="1.10.220.10:FF:000002">
    <property type="entry name" value="Annexin"/>
    <property type="match status" value="1"/>
</dbReference>
<dbReference type="FunFam" id="1.10.220.10:FF:000003">
    <property type="entry name" value="Annexin"/>
    <property type="match status" value="1"/>
</dbReference>
<dbReference type="FunFam" id="1.10.220.10:FF:000007">
    <property type="entry name" value="Annexin"/>
    <property type="match status" value="1"/>
</dbReference>
<dbReference type="Gene3D" id="1.10.220.10">
    <property type="entry name" value="Annexin"/>
    <property type="match status" value="4"/>
</dbReference>
<dbReference type="InterPro" id="IPR001464">
    <property type="entry name" value="Annexin"/>
</dbReference>
<dbReference type="InterPro" id="IPR018502">
    <property type="entry name" value="Annexin_repeat"/>
</dbReference>
<dbReference type="InterPro" id="IPR018252">
    <property type="entry name" value="Annexin_repeat_CS"/>
</dbReference>
<dbReference type="InterPro" id="IPR037104">
    <property type="entry name" value="Annexin_sf"/>
</dbReference>
<dbReference type="InterPro" id="IPR002389">
    <property type="entry name" value="ANX2"/>
</dbReference>
<dbReference type="PANTHER" id="PTHR10502">
    <property type="entry name" value="ANNEXIN"/>
    <property type="match status" value="1"/>
</dbReference>
<dbReference type="PANTHER" id="PTHR10502:SF18">
    <property type="entry name" value="ANNEXIN A2-RELATED"/>
    <property type="match status" value="1"/>
</dbReference>
<dbReference type="Pfam" id="PF00191">
    <property type="entry name" value="Annexin"/>
    <property type="match status" value="4"/>
</dbReference>
<dbReference type="PRINTS" id="PR00196">
    <property type="entry name" value="ANNEXIN"/>
</dbReference>
<dbReference type="PRINTS" id="PR00198">
    <property type="entry name" value="ANNEXINII"/>
</dbReference>
<dbReference type="SMART" id="SM00335">
    <property type="entry name" value="ANX"/>
    <property type="match status" value="4"/>
</dbReference>
<dbReference type="SUPFAM" id="SSF47874">
    <property type="entry name" value="Annexin"/>
    <property type="match status" value="1"/>
</dbReference>
<dbReference type="PROSITE" id="PS00223">
    <property type="entry name" value="ANNEXIN_1"/>
    <property type="match status" value="4"/>
</dbReference>
<dbReference type="PROSITE" id="PS51897">
    <property type="entry name" value="ANNEXIN_2"/>
    <property type="match status" value="4"/>
</dbReference>
<organism>
    <name type="scientific">Canis lupus familiaris</name>
    <name type="common">Dog</name>
    <name type="synonym">Canis familiaris</name>
    <dbReference type="NCBI Taxonomy" id="9615"/>
    <lineage>
        <taxon>Eukaryota</taxon>
        <taxon>Metazoa</taxon>
        <taxon>Chordata</taxon>
        <taxon>Craniata</taxon>
        <taxon>Vertebrata</taxon>
        <taxon>Euteleostomi</taxon>
        <taxon>Mammalia</taxon>
        <taxon>Eutheria</taxon>
        <taxon>Laurasiatheria</taxon>
        <taxon>Carnivora</taxon>
        <taxon>Caniformia</taxon>
        <taxon>Canidae</taxon>
        <taxon>Canis</taxon>
    </lineage>
</organism>
<name>ANXA2_CANLF</name>
<sequence length="339" mass="38654">MSTVHEILCKLSLEGDHSTPPSAYGSVKAYTNFDAERDALNIETAIKTKGVDEVTIVNILTNRSNEQRQDIAFAYQRRTKKELASALKSALSGHLETVILGLLKTPAQYDASELKASMKGLGTDEDSLIEIICSRTNQELQEINRVYKEMYKTDLEKDIISDTSGDFRKLMVALAKGRRAEDGSVIDYELIDQDARDLYDAGVKRKGTDVPKWISIMTERSVCHLQKVFERYKSYSPYDMLESIKKEVKGDLENAFLNLVQCIQNKPLYFADRLYDSMKGKGTRDKVLIRIMVSRSEVDMLKIRSEFKRKYGKSLYYYIQQDTKGDYQKALLYLCGGDD</sequence>
<accession>Q6TEQ7</accession>
<evidence type="ECO:0000250" key="1"/>
<evidence type="ECO:0000250" key="2">
    <source>
        <dbReference type="UniProtKB" id="A2SW69"/>
    </source>
</evidence>
<evidence type="ECO:0000250" key="3">
    <source>
        <dbReference type="UniProtKB" id="P04272"/>
    </source>
</evidence>
<evidence type="ECO:0000250" key="4">
    <source>
        <dbReference type="UniProtKB" id="P07355"/>
    </source>
</evidence>
<evidence type="ECO:0000250" key="5">
    <source>
        <dbReference type="UniProtKB" id="P07356"/>
    </source>
</evidence>
<evidence type="ECO:0000255" key="6"/>
<evidence type="ECO:0000255" key="7">
    <source>
        <dbReference type="PROSITE-ProRule" id="PRU01245"/>
    </source>
</evidence>
<evidence type="ECO:0000305" key="8"/>
<protein>
    <recommendedName>
        <fullName>Annexin A2</fullName>
    </recommendedName>
    <alternativeName>
        <fullName>Annexin-2</fullName>
    </alternativeName>
</protein>
<reference key="1">
    <citation type="journal article" date="2005" name="Mol. Biol. Cell">
        <title>Novel role for Na,K-ATPase in phosphatidylinositol 3-kinase signaling and suppression of cell motility.</title>
        <authorList>
            <person name="Barwe S.P."/>
            <person name="Anilkumar G."/>
            <person name="Moon S.Y."/>
            <person name="Zheng Y."/>
            <person name="Whitelegge J.P."/>
            <person name="Rajasekaran S.A."/>
            <person name="Rajasekaran A.K."/>
        </authorList>
    </citation>
    <scope>NUCLEOTIDE SEQUENCE [MRNA]</scope>
    <scope>INTERACTION WITH ATP1B1</scope>
</reference>
<keyword id="KW-0007">Acetylation</keyword>
<keyword id="KW-0041">Annexin</keyword>
<keyword id="KW-0084">Basement membrane</keyword>
<keyword id="KW-0106">Calcium</keyword>
<keyword id="KW-0111">Calcium/phospholipid-binding</keyword>
<keyword id="KW-0272">Extracellular matrix</keyword>
<keyword id="KW-1017">Isopeptide bond</keyword>
<keyword id="KW-0597">Phosphoprotein</keyword>
<keyword id="KW-1185">Reference proteome</keyword>
<keyword id="KW-0677">Repeat</keyword>
<keyword id="KW-0964">Secreted</keyword>
<keyword id="KW-0832">Ubl conjugation</keyword>
<feature type="initiator methionine" description="Removed" evidence="3">
    <location>
        <position position="1"/>
    </location>
</feature>
<feature type="chain" id="PRO_0000288684" description="Annexin A2">
    <location>
        <begin position="2"/>
        <end position="339"/>
    </location>
</feature>
<feature type="repeat" description="Annexin 1" evidence="7">
    <location>
        <begin position="33"/>
        <end position="104"/>
    </location>
</feature>
<feature type="repeat" description="Annexin 2" evidence="7">
    <location>
        <begin position="105"/>
        <end position="176"/>
    </location>
</feature>
<feature type="repeat" description="Annexin 3" evidence="7">
    <location>
        <begin position="189"/>
        <end position="261"/>
    </location>
</feature>
<feature type="repeat" description="Annexin 4" evidence="7">
    <location>
        <begin position="265"/>
        <end position="336"/>
    </location>
</feature>
<feature type="region of interest" description="S100A10-binding site" evidence="6">
    <location>
        <begin position="2"/>
        <end position="24"/>
    </location>
</feature>
<feature type="modified residue" description="N-acetylserine" evidence="3">
    <location>
        <position position="2"/>
    </location>
</feature>
<feature type="modified residue" description="Phosphotyrosine; by SRC" evidence="4">
    <location>
        <position position="24"/>
    </location>
</feature>
<feature type="modified residue" description="Phosphoserine; by PKC" evidence="4">
    <location>
        <position position="26"/>
    </location>
</feature>
<feature type="modified residue" description="N6-acetyllysine; alternate" evidence="5">
    <location>
        <position position="49"/>
    </location>
</feature>
<feature type="modified residue" description="N6-acetyllysine" evidence="5">
    <location>
        <position position="152"/>
    </location>
</feature>
<feature type="modified residue" description="Phosphoserine" evidence="4">
    <location>
        <position position="184"/>
    </location>
</feature>
<feature type="modified residue" description="Phosphotyrosine" evidence="5">
    <location>
        <position position="199"/>
    </location>
</feature>
<feature type="modified residue" description="N6-acetyllysine" evidence="5">
    <location>
        <position position="227"/>
    </location>
</feature>
<feature type="cross-link" description="Glycyl lysine isopeptide (Lys-Gly) (interchain with G-Cter in SUMO1); alternate" evidence="4">
    <location>
        <position position="49"/>
    </location>
</feature>
<feature type="cross-link" description="Glycyl lysine isopeptide (Lys-Gly) (interchain with G-Cter in SUMO2); alternate" evidence="4">
    <location>
        <position position="49"/>
    </location>
</feature>
<comment type="function">
    <text evidence="4 5">Calcium-regulated membrane-binding protein whose affinity for calcium is greatly enhanced by anionic phospholipids. It binds two calcium ions with high affinity. May be involved in heat-stress response. Inhibits PCSK9-enhanced LDLR degradation, probably reduces PCSK9 protein levels via a translational mechanism but also competes with LDLR for binding with PCSK9. Binds to endosomes damaged by phagocytosis of particulate wear debris and participates in endosomal membrane stabilization, thereby limiting NLRP3 inflammasome activation (By similarity). Required for endothelial cell surface plasmin generation and may support fibrinolytic surveillance and neoangiogenesis (By similarity).</text>
</comment>
<comment type="subunit">
    <text evidence="2 4 5">Heterotetramer containing 2 light chains of S100A10/p11 and 2 heavy chains of ANXA2/p36 (By similarity). Interacts with ATP1B1 (By similarity). Interacts with DYSF (By similarity). Interacts with COCH. Interacts (via repeat Annexin 1) with PCSK9 (via the C-terminal domain); the interaction inhibits the degradation of LDLR. Interacts with CEACAM1 (via the cytoplasmic domain); this interaction is regulated by phosphorylation of CEACAM1 (By similarity). Interacts with APPL2 and APPL1; targets APPL2 to endosomes and acting in parallel to RAB5A (By similarity). Interacts with S100A4 (By similarity). May interact with UBAP2 (By similarity). Interacts with PLEKHG4B; this interaction is required for PLEKHG4B localization to cell-cell adhesions (By similarity).</text>
</comment>
<comment type="subcellular location">
    <subcellularLocation>
        <location>Secreted</location>
        <location>Extracellular space</location>
        <location>Extracellular matrix</location>
        <location>Basement membrane</location>
    </subcellularLocation>
    <text evidence="1">In the lamina beneath the plasma membrane.</text>
</comment>
<comment type="domain">
    <text>A pair of annexin repeats may form one binding site for calcium and phospholipid.</text>
</comment>
<comment type="PTM">
    <text evidence="1">ISGylated.</text>
</comment>
<comment type="miscellaneous">
    <text>It may cross-link plasma membrane phospholipids with actin and the cytoskeleton and be involved with exocytosis.</text>
</comment>
<comment type="similarity">
    <text evidence="7 8">Belongs to the annexin family.</text>
</comment>
<comment type="online information" name="Protein Spotlight">
    <link uri="https://www.proteinspotlight.org/back_issues/086"/>
    <text>Red velvet - Issue 86 of September 2007</text>
</comment>
<gene>
    <name type="primary">ANXA2</name>
    <name type="synonym">ANX2</name>
</gene>